<protein>
    <recommendedName>
        <fullName evidence="1">Dihydroxy-acid dehydratase</fullName>
        <shortName evidence="1">DAD</shortName>
        <ecNumber evidence="1">4.2.1.9</ecNumber>
    </recommendedName>
</protein>
<comment type="function">
    <text evidence="1">Functions in the biosynthesis of branched-chain amino acids. Catalyzes the dehydration of (2R,3R)-2,3-dihydroxy-3-methylpentanoate (2,3-dihydroxy-3-methylvalerate) into 2-oxo-3-methylpentanoate (2-oxo-3-methylvalerate) and of (2R)-2,3-dihydroxy-3-methylbutanoate (2,3-dihydroxyisovalerate) into 2-oxo-3-methylbutanoate (2-oxoisovalerate), the penultimate precursor to L-isoleucine and L-valine, respectively.</text>
</comment>
<comment type="catalytic activity">
    <reaction evidence="1">
        <text>(2R)-2,3-dihydroxy-3-methylbutanoate = 3-methyl-2-oxobutanoate + H2O</text>
        <dbReference type="Rhea" id="RHEA:24809"/>
        <dbReference type="ChEBI" id="CHEBI:11851"/>
        <dbReference type="ChEBI" id="CHEBI:15377"/>
        <dbReference type="ChEBI" id="CHEBI:49072"/>
        <dbReference type="EC" id="4.2.1.9"/>
    </reaction>
    <physiologicalReaction direction="left-to-right" evidence="1">
        <dbReference type="Rhea" id="RHEA:24810"/>
    </physiologicalReaction>
</comment>
<comment type="catalytic activity">
    <reaction evidence="1">
        <text>(2R,3R)-2,3-dihydroxy-3-methylpentanoate = (S)-3-methyl-2-oxopentanoate + H2O</text>
        <dbReference type="Rhea" id="RHEA:27694"/>
        <dbReference type="ChEBI" id="CHEBI:15377"/>
        <dbReference type="ChEBI" id="CHEBI:35146"/>
        <dbReference type="ChEBI" id="CHEBI:49258"/>
        <dbReference type="EC" id="4.2.1.9"/>
    </reaction>
    <physiologicalReaction direction="left-to-right" evidence="1">
        <dbReference type="Rhea" id="RHEA:27695"/>
    </physiologicalReaction>
</comment>
<comment type="cofactor">
    <cofactor evidence="1">
        <name>[2Fe-2S] cluster</name>
        <dbReference type="ChEBI" id="CHEBI:190135"/>
    </cofactor>
    <text evidence="1">Binds 1 [2Fe-2S] cluster per subunit. This cluster acts as a Lewis acid cofactor.</text>
</comment>
<comment type="cofactor">
    <cofactor evidence="1">
        <name>Mg(2+)</name>
        <dbReference type="ChEBI" id="CHEBI:18420"/>
    </cofactor>
</comment>
<comment type="pathway">
    <text evidence="1">Amino-acid biosynthesis; L-isoleucine biosynthesis; L-isoleucine from 2-oxobutanoate: step 3/4.</text>
</comment>
<comment type="pathway">
    <text evidence="1">Amino-acid biosynthesis; L-valine biosynthesis; L-valine from pyruvate: step 3/4.</text>
</comment>
<comment type="subunit">
    <text evidence="1">Homodimer.</text>
</comment>
<comment type="similarity">
    <text evidence="1">Belongs to the IlvD/Edd family.</text>
</comment>
<accession>Q21NV7</accession>
<reference key="1">
    <citation type="journal article" date="2008" name="PLoS Genet.">
        <title>Complete genome sequence of the complex carbohydrate-degrading marine bacterium, Saccharophagus degradans strain 2-40 T.</title>
        <authorList>
            <person name="Weiner R.M."/>
            <person name="Taylor L.E. II"/>
            <person name="Henrissat B."/>
            <person name="Hauser L."/>
            <person name="Land M."/>
            <person name="Coutinho P.M."/>
            <person name="Rancurel C."/>
            <person name="Saunders E.H."/>
            <person name="Longmire A.G."/>
            <person name="Zhang H."/>
            <person name="Bayer E.A."/>
            <person name="Gilbert H.J."/>
            <person name="Larimer F."/>
            <person name="Zhulin I.B."/>
            <person name="Ekborg N.A."/>
            <person name="Lamed R."/>
            <person name="Richardson P.M."/>
            <person name="Borovok I."/>
            <person name="Hutcheson S."/>
        </authorList>
    </citation>
    <scope>NUCLEOTIDE SEQUENCE [LARGE SCALE GENOMIC DNA]</scope>
    <source>
        <strain>2-40 / ATCC 43961 / DSM 17024</strain>
    </source>
</reference>
<gene>
    <name evidence="1" type="primary">ilvD</name>
    <name type="ordered locus">Sde_0358</name>
</gene>
<sequence length="614" mass="65463">MPQYRSRTTTQGRNMAGARALWRATGMKDEDFQKPIIAVVNSFTQFVPGHVHLKDMGQLVAREIEKAGGVAKEFNTIAVDDGIAMGHDGMLYSLPSRDIIADSVEYMVNAHCADAMVCISNCDKITPGMLMAAMRLNIPVVFVSGGPMEAGKTKLAEHGLDLVDAMVIAADSSASDEYVAEIERSACPTCGSCSGMFTANSMNCLTEALGLSLPGNGTVVATHSDRRALFERAGHLIVDLCKDYYERENANVLPRSIGNKAAFENAITLDIAMGGSTNTILHLLAIAQEAELDFTMEDIDRISRYVPQLCKVAPNTQKYHIEDVHRAGGIMSILGELARGNLLNVDCPTVHSPTMADAIAQWDITQTGSAEVAEFYKAGPAGIPTQTAFSQSTRWQSLDGDRADGCIRSVEHAYSKEGGLAVLTGNIAEQGCVVKTAGVDESILVFEGTAYVTESQDQAVADILADKVTAGSVVIVRYEGPKGGPGMQEMLYPTSYIKSKGLGKSCALLTDGRFSGGTSGLSIGHVSPEAAAGGAIGLVKTGDKILIDIPNRSINVLLEDGELEKRRAEQDAKGWKPELPRPRKVSSALKAYALLATSADKGAVRDLKKLESLQ</sequence>
<proteinExistence type="inferred from homology"/>
<keyword id="KW-0001">2Fe-2S</keyword>
<keyword id="KW-0028">Amino-acid biosynthesis</keyword>
<keyword id="KW-0100">Branched-chain amino acid biosynthesis</keyword>
<keyword id="KW-0408">Iron</keyword>
<keyword id="KW-0411">Iron-sulfur</keyword>
<keyword id="KW-0456">Lyase</keyword>
<keyword id="KW-0460">Magnesium</keyword>
<keyword id="KW-0479">Metal-binding</keyword>
<keyword id="KW-1185">Reference proteome</keyword>
<evidence type="ECO:0000255" key="1">
    <source>
        <dbReference type="HAMAP-Rule" id="MF_00012"/>
    </source>
</evidence>
<organism>
    <name type="scientific">Saccharophagus degradans (strain 2-40 / ATCC 43961 / DSM 17024)</name>
    <dbReference type="NCBI Taxonomy" id="203122"/>
    <lineage>
        <taxon>Bacteria</taxon>
        <taxon>Pseudomonadati</taxon>
        <taxon>Pseudomonadota</taxon>
        <taxon>Gammaproteobacteria</taxon>
        <taxon>Cellvibrionales</taxon>
        <taxon>Cellvibrionaceae</taxon>
        <taxon>Saccharophagus</taxon>
    </lineage>
</organism>
<feature type="chain" id="PRO_1000001048" description="Dihydroxy-acid dehydratase">
    <location>
        <begin position="1"/>
        <end position="614"/>
    </location>
</feature>
<feature type="active site" description="Proton acceptor" evidence="1">
    <location>
        <position position="515"/>
    </location>
</feature>
<feature type="binding site" evidence="1">
    <location>
        <position position="81"/>
    </location>
    <ligand>
        <name>Mg(2+)</name>
        <dbReference type="ChEBI" id="CHEBI:18420"/>
    </ligand>
</feature>
<feature type="binding site" evidence="1">
    <location>
        <position position="122"/>
    </location>
    <ligand>
        <name>[2Fe-2S] cluster</name>
        <dbReference type="ChEBI" id="CHEBI:190135"/>
    </ligand>
</feature>
<feature type="binding site" evidence="1">
    <location>
        <position position="123"/>
    </location>
    <ligand>
        <name>Mg(2+)</name>
        <dbReference type="ChEBI" id="CHEBI:18420"/>
    </ligand>
</feature>
<feature type="binding site" description="via carbamate group" evidence="1">
    <location>
        <position position="124"/>
    </location>
    <ligand>
        <name>Mg(2+)</name>
        <dbReference type="ChEBI" id="CHEBI:18420"/>
    </ligand>
</feature>
<feature type="binding site" evidence="1">
    <location>
        <position position="193"/>
    </location>
    <ligand>
        <name>[2Fe-2S] cluster</name>
        <dbReference type="ChEBI" id="CHEBI:190135"/>
    </ligand>
</feature>
<feature type="binding site" evidence="1">
    <location>
        <position position="489"/>
    </location>
    <ligand>
        <name>Mg(2+)</name>
        <dbReference type="ChEBI" id="CHEBI:18420"/>
    </ligand>
</feature>
<feature type="modified residue" description="N6-carboxylysine" evidence="1">
    <location>
        <position position="124"/>
    </location>
</feature>
<dbReference type="EC" id="4.2.1.9" evidence="1"/>
<dbReference type="EMBL" id="CP000282">
    <property type="protein sequence ID" value="ABD79622.1"/>
    <property type="molecule type" value="Genomic_DNA"/>
</dbReference>
<dbReference type="RefSeq" id="WP_011466846.1">
    <property type="nucleotide sequence ID" value="NC_007912.1"/>
</dbReference>
<dbReference type="SMR" id="Q21NV7"/>
<dbReference type="STRING" id="203122.Sde_0358"/>
<dbReference type="GeneID" id="98612059"/>
<dbReference type="KEGG" id="sde:Sde_0358"/>
<dbReference type="eggNOG" id="COG0129">
    <property type="taxonomic scope" value="Bacteria"/>
</dbReference>
<dbReference type="HOGENOM" id="CLU_014271_4_2_6"/>
<dbReference type="OrthoDB" id="9807077at2"/>
<dbReference type="UniPathway" id="UPA00047">
    <property type="reaction ID" value="UER00057"/>
</dbReference>
<dbReference type="UniPathway" id="UPA00049">
    <property type="reaction ID" value="UER00061"/>
</dbReference>
<dbReference type="Proteomes" id="UP000001947">
    <property type="component" value="Chromosome"/>
</dbReference>
<dbReference type="GO" id="GO:0005829">
    <property type="term" value="C:cytosol"/>
    <property type="evidence" value="ECO:0007669"/>
    <property type="project" value="TreeGrafter"/>
</dbReference>
<dbReference type="GO" id="GO:0051537">
    <property type="term" value="F:2 iron, 2 sulfur cluster binding"/>
    <property type="evidence" value="ECO:0007669"/>
    <property type="project" value="UniProtKB-UniRule"/>
</dbReference>
<dbReference type="GO" id="GO:0004160">
    <property type="term" value="F:dihydroxy-acid dehydratase activity"/>
    <property type="evidence" value="ECO:0007669"/>
    <property type="project" value="UniProtKB-UniRule"/>
</dbReference>
<dbReference type="GO" id="GO:0000287">
    <property type="term" value="F:magnesium ion binding"/>
    <property type="evidence" value="ECO:0007669"/>
    <property type="project" value="UniProtKB-UniRule"/>
</dbReference>
<dbReference type="GO" id="GO:0009097">
    <property type="term" value="P:isoleucine biosynthetic process"/>
    <property type="evidence" value="ECO:0007669"/>
    <property type="project" value="UniProtKB-UniRule"/>
</dbReference>
<dbReference type="GO" id="GO:0009099">
    <property type="term" value="P:L-valine biosynthetic process"/>
    <property type="evidence" value="ECO:0007669"/>
    <property type="project" value="UniProtKB-UniRule"/>
</dbReference>
<dbReference type="FunFam" id="3.50.30.80:FF:000001">
    <property type="entry name" value="Dihydroxy-acid dehydratase"/>
    <property type="match status" value="1"/>
</dbReference>
<dbReference type="Gene3D" id="3.50.30.80">
    <property type="entry name" value="IlvD/EDD C-terminal domain-like"/>
    <property type="match status" value="1"/>
</dbReference>
<dbReference type="HAMAP" id="MF_00012">
    <property type="entry name" value="IlvD"/>
    <property type="match status" value="1"/>
</dbReference>
<dbReference type="InterPro" id="IPR042096">
    <property type="entry name" value="Dihydro-acid_dehy_C"/>
</dbReference>
<dbReference type="InterPro" id="IPR004404">
    <property type="entry name" value="DihydroxyA_deHydtase"/>
</dbReference>
<dbReference type="InterPro" id="IPR020558">
    <property type="entry name" value="DiOHA_6PGluconate_deHydtase_CS"/>
</dbReference>
<dbReference type="InterPro" id="IPR056740">
    <property type="entry name" value="ILV_EDD_C"/>
</dbReference>
<dbReference type="InterPro" id="IPR000581">
    <property type="entry name" value="ILV_EDD_N"/>
</dbReference>
<dbReference type="InterPro" id="IPR037237">
    <property type="entry name" value="IlvD/EDD_N"/>
</dbReference>
<dbReference type="NCBIfam" id="TIGR00110">
    <property type="entry name" value="ilvD"/>
    <property type="match status" value="1"/>
</dbReference>
<dbReference type="NCBIfam" id="NF009103">
    <property type="entry name" value="PRK12448.1"/>
    <property type="match status" value="1"/>
</dbReference>
<dbReference type="PANTHER" id="PTHR43661">
    <property type="entry name" value="D-XYLONATE DEHYDRATASE"/>
    <property type="match status" value="1"/>
</dbReference>
<dbReference type="PANTHER" id="PTHR43661:SF3">
    <property type="entry name" value="D-XYLONATE DEHYDRATASE YAGF-RELATED"/>
    <property type="match status" value="1"/>
</dbReference>
<dbReference type="Pfam" id="PF24877">
    <property type="entry name" value="ILV_EDD_C"/>
    <property type="match status" value="1"/>
</dbReference>
<dbReference type="Pfam" id="PF00920">
    <property type="entry name" value="ILVD_EDD_N"/>
    <property type="match status" value="1"/>
</dbReference>
<dbReference type="SUPFAM" id="SSF143975">
    <property type="entry name" value="IlvD/EDD N-terminal domain-like"/>
    <property type="match status" value="1"/>
</dbReference>
<dbReference type="SUPFAM" id="SSF52016">
    <property type="entry name" value="LeuD/IlvD-like"/>
    <property type="match status" value="1"/>
</dbReference>
<dbReference type="PROSITE" id="PS00886">
    <property type="entry name" value="ILVD_EDD_1"/>
    <property type="match status" value="1"/>
</dbReference>
<dbReference type="PROSITE" id="PS00887">
    <property type="entry name" value="ILVD_EDD_2"/>
    <property type="match status" value="1"/>
</dbReference>
<name>ILVD_SACD2</name>